<evidence type="ECO:0000250" key="1"/>
<evidence type="ECO:0000305" key="2"/>
<keyword id="KW-0963">Cytoplasm</keyword>
<keyword id="KW-0227">DNA damage</keyword>
<keyword id="KW-0234">DNA repair</keyword>
<keyword id="KW-0539">Nucleus</keyword>
<keyword id="KW-0653">Protein transport</keyword>
<keyword id="KW-1185">Reference proteome</keyword>
<keyword id="KW-0813">Transport</keyword>
<gene>
    <name type="primary">Ap5z1</name>
    <name type="synonym">Kiaa0415</name>
</gene>
<proteinExistence type="evidence at transcript level"/>
<comment type="function">
    <text evidence="1">As part of AP-5, a probable fifth adaptor protein complex it may be involved in endosomal transport.</text>
</comment>
<comment type="subunit">
    <text evidence="1">Probably part of the adaptor protein complex 5 (AP-5) a tetramer composed of AP5B1, AP5M1, AP5S1 and AP5Z1. Interacts with ZFYVE26 and SPG11 (By similarity).</text>
</comment>
<comment type="subcellular location">
    <subcellularLocation>
        <location evidence="1">Cytoplasm</location>
    </subcellularLocation>
    <subcellularLocation>
        <location evidence="1">Nucleus</location>
    </subcellularLocation>
</comment>
<comment type="sequence caution" evidence="2">
    <conflict type="erroneous initiation">
        <sequence resource="EMBL-CDS" id="BAC30747"/>
    </conflict>
    <text>Truncated N-terminus.</text>
</comment>
<protein>
    <recommendedName>
        <fullName>AP-5 complex subunit zeta-1</fullName>
    </recommendedName>
    <alternativeName>
        <fullName>Adaptor-related protein complex 5 zeta subunit</fullName>
        <shortName>Zeta5</shortName>
    </alternativeName>
</protein>
<reference key="1">
    <citation type="journal article" date="2005" name="Science">
        <title>The transcriptional landscape of the mammalian genome.</title>
        <authorList>
            <person name="Carninci P."/>
            <person name="Kasukawa T."/>
            <person name="Katayama S."/>
            <person name="Gough J."/>
            <person name="Frith M.C."/>
            <person name="Maeda N."/>
            <person name="Oyama R."/>
            <person name="Ravasi T."/>
            <person name="Lenhard B."/>
            <person name="Wells C."/>
            <person name="Kodzius R."/>
            <person name="Shimokawa K."/>
            <person name="Bajic V.B."/>
            <person name="Brenner S.E."/>
            <person name="Batalov S."/>
            <person name="Forrest A.R."/>
            <person name="Zavolan M."/>
            <person name="Davis M.J."/>
            <person name="Wilming L.G."/>
            <person name="Aidinis V."/>
            <person name="Allen J.E."/>
            <person name="Ambesi-Impiombato A."/>
            <person name="Apweiler R."/>
            <person name="Aturaliya R.N."/>
            <person name="Bailey T.L."/>
            <person name="Bansal M."/>
            <person name="Baxter L."/>
            <person name="Beisel K.W."/>
            <person name="Bersano T."/>
            <person name="Bono H."/>
            <person name="Chalk A.M."/>
            <person name="Chiu K.P."/>
            <person name="Choudhary V."/>
            <person name="Christoffels A."/>
            <person name="Clutterbuck D.R."/>
            <person name="Crowe M.L."/>
            <person name="Dalla E."/>
            <person name="Dalrymple B.P."/>
            <person name="de Bono B."/>
            <person name="Della Gatta G."/>
            <person name="di Bernardo D."/>
            <person name="Down T."/>
            <person name="Engstrom P."/>
            <person name="Fagiolini M."/>
            <person name="Faulkner G."/>
            <person name="Fletcher C.F."/>
            <person name="Fukushima T."/>
            <person name="Furuno M."/>
            <person name="Futaki S."/>
            <person name="Gariboldi M."/>
            <person name="Georgii-Hemming P."/>
            <person name="Gingeras T.R."/>
            <person name="Gojobori T."/>
            <person name="Green R.E."/>
            <person name="Gustincich S."/>
            <person name="Harbers M."/>
            <person name="Hayashi Y."/>
            <person name="Hensch T.K."/>
            <person name="Hirokawa N."/>
            <person name="Hill D."/>
            <person name="Huminiecki L."/>
            <person name="Iacono M."/>
            <person name="Ikeo K."/>
            <person name="Iwama A."/>
            <person name="Ishikawa T."/>
            <person name="Jakt M."/>
            <person name="Kanapin A."/>
            <person name="Katoh M."/>
            <person name="Kawasawa Y."/>
            <person name="Kelso J."/>
            <person name="Kitamura H."/>
            <person name="Kitano H."/>
            <person name="Kollias G."/>
            <person name="Krishnan S.P."/>
            <person name="Kruger A."/>
            <person name="Kummerfeld S.K."/>
            <person name="Kurochkin I.V."/>
            <person name="Lareau L.F."/>
            <person name="Lazarevic D."/>
            <person name="Lipovich L."/>
            <person name="Liu J."/>
            <person name="Liuni S."/>
            <person name="McWilliam S."/>
            <person name="Madan Babu M."/>
            <person name="Madera M."/>
            <person name="Marchionni L."/>
            <person name="Matsuda H."/>
            <person name="Matsuzawa S."/>
            <person name="Miki H."/>
            <person name="Mignone F."/>
            <person name="Miyake S."/>
            <person name="Morris K."/>
            <person name="Mottagui-Tabar S."/>
            <person name="Mulder N."/>
            <person name="Nakano N."/>
            <person name="Nakauchi H."/>
            <person name="Ng P."/>
            <person name="Nilsson R."/>
            <person name="Nishiguchi S."/>
            <person name="Nishikawa S."/>
            <person name="Nori F."/>
            <person name="Ohara O."/>
            <person name="Okazaki Y."/>
            <person name="Orlando V."/>
            <person name="Pang K.C."/>
            <person name="Pavan W.J."/>
            <person name="Pavesi G."/>
            <person name="Pesole G."/>
            <person name="Petrovsky N."/>
            <person name="Piazza S."/>
            <person name="Reed J."/>
            <person name="Reid J.F."/>
            <person name="Ring B.Z."/>
            <person name="Ringwald M."/>
            <person name="Rost B."/>
            <person name="Ruan Y."/>
            <person name="Salzberg S.L."/>
            <person name="Sandelin A."/>
            <person name="Schneider C."/>
            <person name="Schoenbach C."/>
            <person name="Sekiguchi K."/>
            <person name="Semple C.A."/>
            <person name="Seno S."/>
            <person name="Sessa L."/>
            <person name="Sheng Y."/>
            <person name="Shibata Y."/>
            <person name="Shimada H."/>
            <person name="Shimada K."/>
            <person name="Silva D."/>
            <person name="Sinclair B."/>
            <person name="Sperling S."/>
            <person name="Stupka E."/>
            <person name="Sugiura K."/>
            <person name="Sultana R."/>
            <person name="Takenaka Y."/>
            <person name="Taki K."/>
            <person name="Tammoja K."/>
            <person name="Tan S.L."/>
            <person name="Tang S."/>
            <person name="Taylor M.S."/>
            <person name="Tegner J."/>
            <person name="Teichmann S.A."/>
            <person name="Ueda H.R."/>
            <person name="van Nimwegen E."/>
            <person name="Verardo R."/>
            <person name="Wei C.L."/>
            <person name="Yagi K."/>
            <person name="Yamanishi H."/>
            <person name="Zabarovsky E."/>
            <person name="Zhu S."/>
            <person name="Zimmer A."/>
            <person name="Hide W."/>
            <person name="Bult C."/>
            <person name="Grimmond S.M."/>
            <person name="Teasdale R.D."/>
            <person name="Liu E.T."/>
            <person name="Brusic V."/>
            <person name="Quackenbush J."/>
            <person name="Wahlestedt C."/>
            <person name="Mattick J.S."/>
            <person name="Hume D.A."/>
            <person name="Kai C."/>
            <person name="Sasaki D."/>
            <person name="Tomaru Y."/>
            <person name="Fukuda S."/>
            <person name="Kanamori-Katayama M."/>
            <person name="Suzuki M."/>
            <person name="Aoki J."/>
            <person name="Arakawa T."/>
            <person name="Iida J."/>
            <person name="Imamura K."/>
            <person name="Itoh M."/>
            <person name="Kato T."/>
            <person name="Kawaji H."/>
            <person name="Kawagashira N."/>
            <person name="Kawashima T."/>
            <person name="Kojima M."/>
            <person name="Kondo S."/>
            <person name="Konno H."/>
            <person name="Nakano K."/>
            <person name="Ninomiya N."/>
            <person name="Nishio T."/>
            <person name="Okada M."/>
            <person name="Plessy C."/>
            <person name="Shibata K."/>
            <person name="Shiraki T."/>
            <person name="Suzuki S."/>
            <person name="Tagami M."/>
            <person name="Waki K."/>
            <person name="Watahiki A."/>
            <person name="Okamura-Oho Y."/>
            <person name="Suzuki H."/>
            <person name="Kawai J."/>
            <person name="Hayashizaki Y."/>
        </authorList>
    </citation>
    <scope>NUCLEOTIDE SEQUENCE [LARGE SCALE MRNA]</scope>
    <source>
        <strain>C57BL/6J</strain>
        <strain>DBA/2J</strain>
        <tissue>Aorta</tissue>
        <tissue>Bone marrow</tissue>
    </source>
</reference>
<reference key="2">
    <citation type="journal article" date="2004" name="Genome Res.">
        <title>The status, quality, and expansion of the NIH full-length cDNA project: the Mammalian Gene Collection (MGC).</title>
        <authorList>
            <consortium name="The MGC Project Team"/>
        </authorList>
    </citation>
    <scope>NUCLEOTIDE SEQUENCE [LARGE SCALE MRNA] OF 1-378</scope>
    <source>
        <strain>C57BL/6J</strain>
        <tissue>Brain</tissue>
    </source>
</reference>
<sequence length="807" mass="89407">MFSAGAESLLHQAREIQDEELRRFCSRVTKLLQEAPGPATVDALQRLFLIVSATKYPRRLEKMCVDLLQTTLCLPASPEQLQVLCAAILREMSPFNDLALSCDHTPNTRQLSLVASVLLAQGDRKGEIRCVSQRIFKILENRQPEGPSVRPLLPILSKVIGLAPGILMEDQTNLLSKRLVDWLRYASIQQGLPYSGGFFSTPRTRQPGPITEVDGAVASDFFTVLSTGQHFTEDQWVNMQAFSMLRKWLLHSGPEDPCSPDADDKSELEGSTLSVLSAASTASRLLPPRERLREVAFEYCQRLLEQSNRRALRKGDSDLQKACLVEAVSVLDVLCRQDPSFLYRTLSCLKALHRRLGEDPGSERALVPLAQFFLNHGEAAAMDAEAVYGQLLRGLPSERFHSPTLAFEVIHFCTHNLALFDSHFLSLLRLSFPSLFKFLAWNSPPLTAEFVVLLPALVDAGTAVEMLHALLDLPCLTAALDLQLRSTQTPSERLLWDISLRVPSCLEAFQDPQFQGLFRHLLRTKASGSTERLTPLHQVLKPMASCARVTQCAEAVPVLLQAFFSAVTQTADGALINQLALLLLERSDSLYPVPQYEARVHGVLSSQLLVLCKLKPSLVVELSRELLEFVGSVSSIHSRASVFTCVVWAIGEYLSVTWDKRCTAEQINKFFEALEALLFEVTQSRPLADLPCCPPEVVTALMTTLTKLASRSQDLIPRVSLFLSKMRTLAQNPATSSVHSEEGAESIRTRASELLTLLKMPSVAQFVFTPPAGVCQPRYHRDTNVALPLALRTVSRLVEKEAGLLPG</sequence>
<accession>Q3U829</accession>
<accession>Q3UJJ0</accession>
<accession>Q63ZW8</accession>
<accession>Q8BS06</accession>
<accession>Q8C488</accession>
<feature type="chain" id="PRO_0000261358" description="AP-5 complex subunit zeta-1">
    <location>
        <begin position="1"/>
        <end position="807"/>
    </location>
</feature>
<feature type="sequence conflict" description="In Ref. 2; AAH82786." evidence="2" ref="2">
    <original>C</original>
    <variation>G</variation>
    <location>
        <position position="323"/>
    </location>
</feature>
<feature type="sequence conflict" description="In Ref. 1; BAC30747." evidence="2" ref="1">
    <original>D</original>
    <variation>N</variation>
    <location>
        <position position="338"/>
    </location>
</feature>
<feature type="sequence conflict" description="In Ref. 1; BAE27165." evidence="2" ref="1">
    <original>L</original>
    <variation>I</variation>
    <location>
        <position position="428"/>
    </location>
</feature>
<feature type="sequence conflict" description="In Ref. 1; BAC38605." evidence="2" ref="1">
    <original>V</original>
    <variation>I</variation>
    <location>
        <position position="558"/>
    </location>
</feature>
<name>AP5Z1_MOUSE</name>
<dbReference type="EMBL" id="AK040924">
    <property type="protein sequence ID" value="BAC30747.1"/>
    <property type="status" value="ALT_INIT"/>
    <property type="molecule type" value="mRNA"/>
</dbReference>
<dbReference type="EMBL" id="AK082759">
    <property type="protein sequence ID" value="BAC38605.1"/>
    <property type="molecule type" value="mRNA"/>
</dbReference>
<dbReference type="EMBL" id="AK146431">
    <property type="protein sequence ID" value="BAE27165.1"/>
    <property type="molecule type" value="mRNA"/>
</dbReference>
<dbReference type="EMBL" id="AK152402">
    <property type="protein sequence ID" value="BAE31190.1"/>
    <property type="molecule type" value="mRNA"/>
</dbReference>
<dbReference type="EMBL" id="BC082786">
    <property type="protein sequence ID" value="AAH82786.1"/>
    <property type="molecule type" value="mRNA"/>
</dbReference>
<dbReference type="CCDS" id="CCDS39361.1"/>
<dbReference type="RefSeq" id="NP_766313.2">
    <property type="nucleotide sequence ID" value="NM_172725.2"/>
</dbReference>
<dbReference type="ComplexPortal" id="CPX-5182">
    <property type="entry name" value="AP-5 Adaptor complex"/>
</dbReference>
<dbReference type="FunCoup" id="Q3U829">
    <property type="interactions" value="2597"/>
</dbReference>
<dbReference type="IntAct" id="Q3U829">
    <property type="interactions" value="1"/>
</dbReference>
<dbReference type="STRING" id="10090.ENSMUSP00000041863"/>
<dbReference type="iPTMnet" id="Q3U829"/>
<dbReference type="PhosphoSitePlus" id="Q3U829"/>
<dbReference type="jPOST" id="Q3U829"/>
<dbReference type="PaxDb" id="10090-ENSMUSP00000041863"/>
<dbReference type="PeptideAtlas" id="Q3U829"/>
<dbReference type="ProteomicsDB" id="281789"/>
<dbReference type="Pumba" id="Q3U829"/>
<dbReference type="Antibodypedia" id="48203">
    <property type="antibodies" value="75 antibodies from 16 providers"/>
</dbReference>
<dbReference type="DNASU" id="231855"/>
<dbReference type="Ensembl" id="ENSMUST00000038699.13">
    <property type="protein sequence ID" value="ENSMUSP00000041863.9"/>
    <property type="gene ID" value="ENSMUSG00000039623.14"/>
</dbReference>
<dbReference type="GeneID" id="231855"/>
<dbReference type="KEGG" id="mmu:231855"/>
<dbReference type="UCSC" id="uc009aiq.1">
    <property type="organism name" value="mouse"/>
</dbReference>
<dbReference type="AGR" id="MGI:1924908"/>
<dbReference type="CTD" id="9907"/>
<dbReference type="MGI" id="MGI:1924908">
    <property type="gene designation" value="Ap5z1"/>
</dbReference>
<dbReference type="VEuPathDB" id="HostDB:ENSMUSG00000039623"/>
<dbReference type="eggNOG" id="ENOG502QVBK">
    <property type="taxonomic scope" value="Eukaryota"/>
</dbReference>
<dbReference type="GeneTree" id="ENSGT00390000017592"/>
<dbReference type="InParanoid" id="Q3U829"/>
<dbReference type="OMA" id="LMLAYEF"/>
<dbReference type="OrthoDB" id="744564at2759"/>
<dbReference type="PhylomeDB" id="Q3U829"/>
<dbReference type="TreeFam" id="TF331050"/>
<dbReference type="BioGRID-ORCS" id="231855">
    <property type="hits" value="3 hits in 115 CRISPR screens"/>
</dbReference>
<dbReference type="ChiTaRS" id="Ap5z1">
    <property type="organism name" value="mouse"/>
</dbReference>
<dbReference type="PRO" id="PR:Q3U829"/>
<dbReference type="Proteomes" id="UP000000589">
    <property type="component" value="Chromosome 5"/>
</dbReference>
<dbReference type="RNAct" id="Q3U829">
    <property type="molecule type" value="protein"/>
</dbReference>
<dbReference type="Bgee" id="ENSMUSG00000039623">
    <property type="expression patterns" value="Expressed in ear vesicle and 171 other cell types or tissues"/>
</dbReference>
<dbReference type="ExpressionAtlas" id="Q3U829">
    <property type="expression patterns" value="baseline and differential"/>
</dbReference>
<dbReference type="GO" id="GO:0044599">
    <property type="term" value="C:AP-5 adaptor complex"/>
    <property type="evidence" value="ECO:0000303"/>
    <property type="project" value="ComplexPortal"/>
</dbReference>
<dbReference type="GO" id="GO:0005737">
    <property type="term" value="C:cytoplasm"/>
    <property type="evidence" value="ECO:0000250"/>
    <property type="project" value="UniProtKB"/>
</dbReference>
<dbReference type="GO" id="GO:0005770">
    <property type="term" value="C:late endosome"/>
    <property type="evidence" value="ECO:0000303"/>
    <property type="project" value="ComplexPortal"/>
</dbReference>
<dbReference type="GO" id="GO:0005764">
    <property type="term" value="C:lysosome"/>
    <property type="evidence" value="ECO:0000315"/>
    <property type="project" value="MGI"/>
</dbReference>
<dbReference type="GO" id="GO:0016607">
    <property type="term" value="C:nuclear speck"/>
    <property type="evidence" value="ECO:0007669"/>
    <property type="project" value="Ensembl"/>
</dbReference>
<dbReference type="GO" id="GO:0005634">
    <property type="term" value="C:nucleus"/>
    <property type="evidence" value="ECO:0000250"/>
    <property type="project" value="UniProtKB"/>
</dbReference>
<dbReference type="GO" id="GO:0000045">
    <property type="term" value="P:autophagosome assembly"/>
    <property type="evidence" value="ECO:0000315"/>
    <property type="project" value="MGI"/>
</dbReference>
<dbReference type="GO" id="GO:0006914">
    <property type="term" value="P:autophagy"/>
    <property type="evidence" value="ECO:0000315"/>
    <property type="project" value="MGI"/>
</dbReference>
<dbReference type="GO" id="GO:0061564">
    <property type="term" value="P:axon development"/>
    <property type="evidence" value="ECO:0000315"/>
    <property type="project" value="MGI"/>
</dbReference>
<dbReference type="GO" id="GO:0000724">
    <property type="term" value="P:double-strand break repair via homologous recombination"/>
    <property type="evidence" value="ECO:0000250"/>
    <property type="project" value="UniProtKB"/>
</dbReference>
<dbReference type="GO" id="GO:0016197">
    <property type="term" value="P:endosomal transport"/>
    <property type="evidence" value="ECO:0000250"/>
    <property type="project" value="UniProtKB"/>
</dbReference>
<dbReference type="GO" id="GO:0010467">
    <property type="term" value="P:gene expression"/>
    <property type="evidence" value="ECO:0000315"/>
    <property type="project" value="MGI"/>
</dbReference>
<dbReference type="GO" id="GO:0007030">
    <property type="term" value="P:Golgi organization"/>
    <property type="evidence" value="ECO:0000315"/>
    <property type="project" value="MGI"/>
</dbReference>
<dbReference type="GO" id="GO:0006886">
    <property type="term" value="P:intracellular protein transport"/>
    <property type="evidence" value="ECO:0000315"/>
    <property type="project" value="MGI"/>
</dbReference>
<dbReference type="GO" id="GO:0034499">
    <property type="term" value="P:late endosome to Golgi transport"/>
    <property type="evidence" value="ECO:0000315"/>
    <property type="project" value="MGI"/>
</dbReference>
<dbReference type="GO" id="GO:1905146">
    <property type="term" value="P:lysosomal protein catabolic process"/>
    <property type="evidence" value="ECO:0000315"/>
    <property type="project" value="MGI"/>
</dbReference>
<dbReference type="GO" id="GO:0007040">
    <property type="term" value="P:lysosome organization"/>
    <property type="evidence" value="ECO:0000315"/>
    <property type="project" value="MGI"/>
</dbReference>
<dbReference type="GO" id="GO:0016192">
    <property type="term" value="P:vesicle-mediated transport"/>
    <property type="evidence" value="ECO:0000303"/>
    <property type="project" value="ComplexPortal"/>
</dbReference>
<dbReference type="InterPro" id="IPR028222">
    <property type="entry name" value="AP5Z1"/>
</dbReference>
<dbReference type="InterPro" id="IPR055450">
    <property type="entry name" value="AP5Z1_ARM"/>
</dbReference>
<dbReference type="InterPro" id="IPR016024">
    <property type="entry name" value="ARM-type_fold"/>
</dbReference>
<dbReference type="InterPro" id="IPR056856">
    <property type="entry name" value="TPR_AP5Z1_C"/>
</dbReference>
<dbReference type="InterPro" id="IPR056857">
    <property type="entry name" value="TPR_AP5Z1_N"/>
</dbReference>
<dbReference type="PANTHER" id="PTHR46488">
    <property type="entry name" value="AP-5 COMPLEX SUBUNIT ZETA-1"/>
    <property type="match status" value="1"/>
</dbReference>
<dbReference type="PANTHER" id="PTHR46488:SF1">
    <property type="entry name" value="AP-5 COMPLEX SUBUNIT ZETA-1"/>
    <property type="match status" value="1"/>
</dbReference>
<dbReference type="Pfam" id="PF14764">
    <property type="entry name" value="SPG48"/>
    <property type="match status" value="1"/>
</dbReference>
<dbReference type="Pfam" id="PF25153">
    <property type="entry name" value="TPR_AP5Z1"/>
    <property type="match status" value="1"/>
</dbReference>
<dbReference type="Pfam" id="PF25154">
    <property type="entry name" value="TPR_AP5Z1_C"/>
    <property type="match status" value="1"/>
</dbReference>
<dbReference type="SUPFAM" id="SSF48371">
    <property type="entry name" value="ARM repeat"/>
    <property type="match status" value="1"/>
</dbReference>
<organism>
    <name type="scientific">Mus musculus</name>
    <name type="common">Mouse</name>
    <dbReference type="NCBI Taxonomy" id="10090"/>
    <lineage>
        <taxon>Eukaryota</taxon>
        <taxon>Metazoa</taxon>
        <taxon>Chordata</taxon>
        <taxon>Craniata</taxon>
        <taxon>Vertebrata</taxon>
        <taxon>Euteleostomi</taxon>
        <taxon>Mammalia</taxon>
        <taxon>Eutheria</taxon>
        <taxon>Euarchontoglires</taxon>
        <taxon>Glires</taxon>
        <taxon>Rodentia</taxon>
        <taxon>Myomorpha</taxon>
        <taxon>Muroidea</taxon>
        <taxon>Muridae</taxon>
        <taxon>Murinae</taxon>
        <taxon>Mus</taxon>
        <taxon>Mus</taxon>
    </lineage>
</organism>